<protein>
    <recommendedName>
        <fullName evidence="1">ATP-dependent helicase/deoxyribonuclease subunit B</fullName>
        <ecNumber evidence="1">3.1.-.-</ecNumber>
    </recommendedName>
    <alternativeName>
        <fullName evidence="1">ATP-dependent helicase/nuclease subunit AddB</fullName>
    </alternativeName>
</protein>
<name>ADDB_STAEQ</name>
<feature type="chain" id="PRO_0000379220" description="ATP-dependent helicase/deoxyribonuclease subunit B">
    <location>
        <begin position="1"/>
        <end position="1159"/>
    </location>
</feature>
<feature type="domain" description="UvrD-like helicase ATP-binding" evidence="1">
    <location>
        <begin position="1"/>
        <end position="275"/>
    </location>
</feature>
<feature type="domain" description="UvrD-like helicase C-terminal" evidence="1">
    <location>
        <begin position="269"/>
        <end position="583"/>
    </location>
</feature>
<feature type="binding site" evidence="1">
    <location>
        <begin position="8"/>
        <end position="15"/>
    </location>
    <ligand>
        <name>ATP</name>
        <dbReference type="ChEBI" id="CHEBI:30616"/>
    </ligand>
</feature>
<feature type="binding site" evidence="1">
    <location>
        <position position="784"/>
    </location>
    <ligand>
        <name>[4Fe-4S] cluster</name>
        <dbReference type="ChEBI" id="CHEBI:49883"/>
    </ligand>
</feature>
<feature type="binding site" evidence="1">
    <location>
        <position position="1112"/>
    </location>
    <ligand>
        <name>[4Fe-4S] cluster</name>
        <dbReference type="ChEBI" id="CHEBI:49883"/>
    </ligand>
</feature>
<feature type="binding site" evidence="1">
    <location>
        <position position="1115"/>
    </location>
    <ligand>
        <name>[4Fe-4S] cluster</name>
        <dbReference type="ChEBI" id="CHEBI:49883"/>
    </ligand>
</feature>
<feature type="binding site" evidence="1">
    <location>
        <position position="1121"/>
    </location>
    <ligand>
        <name>[4Fe-4S] cluster</name>
        <dbReference type="ChEBI" id="CHEBI:49883"/>
    </ligand>
</feature>
<gene>
    <name evidence="1" type="primary">addB</name>
    <name type="synonym">rexB</name>
    <name type="ordered locus">SERP0554</name>
</gene>
<keyword id="KW-0004">4Fe-4S</keyword>
<keyword id="KW-0067">ATP-binding</keyword>
<keyword id="KW-0227">DNA damage</keyword>
<keyword id="KW-0234">DNA repair</keyword>
<keyword id="KW-0238">DNA-binding</keyword>
<keyword id="KW-0269">Exonuclease</keyword>
<keyword id="KW-0347">Helicase</keyword>
<keyword id="KW-0378">Hydrolase</keyword>
<keyword id="KW-0408">Iron</keyword>
<keyword id="KW-0411">Iron-sulfur</keyword>
<keyword id="KW-0479">Metal-binding</keyword>
<keyword id="KW-0540">Nuclease</keyword>
<keyword id="KW-0547">Nucleotide-binding</keyword>
<keyword id="KW-1185">Reference proteome</keyword>
<sequence>MEFNTYIGRAGTGKSTAMLNQIKNKMKQDPLGDPIVLIAPTQSTFQLEQAFVNDSELHGSLRTEVLHFERLSHRVFQEVGGLTEQRLSKAALEMMIFHIVQQHESDLKLYGSQAQYYGLSEKLAEQIQDFKKYNVTPEHLNQLIENHSIQTRTKHKLEDISLIYKQLESRMNGEFITTEDSLQQFIEILSQSQWIKKAEVFIDGFHNFSTLEYRIIEALVQHAKQVTVLLTTDGSHHPFSLFRKPSEVLSHLEDIANRLNINLNKTYFNTFYRYNNDDLKNLENGFDALQFTPKHHQNHVKIFESSSMREEINEVARRILKDVREADYKFRDIAILYRDESYAYLFESILPSYDIPFNIDTKKSMTHHPIMEMLRSLLEVIRSNWHINAMLRLFKTNVLTSQFKRSSYLIDLLENFVLERGIYGKRWLDEDIFSIDQFSRMGRKSHQLTEGHQALYKEVIKLKKNVINKVLYFEQAMNEAHTVKDYATSFYESLEYFELPSQLMTQRDELELAGLTEKAEEIDQVWNGLIQILDDLVTVFDDQEMTLQQFLDVFDIGLEQLEFVMIPQTLDQVSIGTMDLAKVDNKKHIYMVGMNDGILPQTVSSSSLITDEEKKYVEDNAHVELSPTSDILQMDEAFVCYIAMTRSQQSVTFSYSLMGNSGDEKEISPFLTQIKELFYDLEITNLQDLHKAQPLLMMQHSHQTKIQLFEYLRGWLDHEDIDYRWLDAYLAIRDDDQLNQGLDYLTTSLTYDNETVQLNEILSQQLYGKTINASVSRFEGYQQCPFKHYASHGLRLNERTKYELQNFDLGDIFHSVLKYISDRIYGDFKNLDTKNIQSLTKEALELILPKVQFNLLNSSAYYKYLSKKIGSIVETTLKALKYQGEYSKFVPQRFETGFRKSPKNKGELVAQPLITNQGIPINIRGQIDRIDTYTKGDHSYVNIIDYKSSESSATLDLTKVYYGLQMQMMTYMDIVLQNKERLGLTDIVKPGGLLYFHVHEPRIKFKSWADIDEDQFQKDYIKNFKMSGLLNRDQEVLDALDIRLEPKYNSDIVPIALTAKGAINQRSSKVADENIIYQLIEHNKKNFIETASHIMDGHTEVAPLKYKQVLPCQFCNYKSVCHVDGLIDSKRYRTVDESIKPLDLIQQLRNEGGERHDSN</sequence>
<comment type="function">
    <text evidence="1">The heterodimer acts as both an ATP-dependent DNA helicase and an ATP-dependent, dual-direction single-stranded exonuclease. Recognizes the chi site generating a DNA molecule suitable for the initiation of homologous recombination. The AddB subunit has 5' -&gt; 3' nuclease activity but not helicase activity.</text>
</comment>
<comment type="cofactor">
    <cofactor evidence="1">
        <name>Mg(2+)</name>
        <dbReference type="ChEBI" id="CHEBI:18420"/>
    </cofactor>
</comment>
<comment type="cofactor">
    <cofactor evidence="1">
        <name>[4Fe-4S] cluster</name>
        <dbReference type="ChEBI" id="CHEBI:49883"/>
    </cofactor>
    <text evidence="1">Binds 1 [4Fe-4S] cluster.</text>
</comment>
<comment type="subunit">
    <text evidence="1">Heterodimer of AddA and AddB.</text>
</comment>
<comment type="miscellaneous">
    <text evidence="1">Despite having conserved helicase domains, this subunit does not have helicase activity.</text>
</comment>
<comment type="similarity">
    <text evidence="1">Belongs to the helicase family. AddB/RexB type 1 subfamily.</text>
</comment>
<dbReference type="EC" id="3.1.-.-" evidence="1"/>
<dbReference type="EMBL" id="CP000029">
    <property type="protein sequence ID" value="AAW53933.1"/>
    <property type="molecule type" value="Genomic_DNA"/>
</dbReference>
<dbReference type="RefSeq" id="WP_001831905.1">
    <property type="nucleotide sequence ID" value="NC_002976.3"/>
</dbReference>
<dbReference type="SMR" id="Q5HQJ5"/>
<dbReference type="STRING" id="176279.SERP0554"/>
<dbReference type="KEGG" id="ser:SERP0554"/>
<dbReference type="eggNOG" id="COG3857">
    <property type="taxonomic scope" value="Bacteria"/>
</dbReference>
<dbReference type="HOGENOM" id="CLU_007838_0_0_9"/>
<dbReference type="Proteomes" id="UP000000531">
    <property type="component" value="Chromosome"/>
</dbReference>
<dbReference type="GO" id="GO:0051539">
    <property type="term" value="F:4 iron, 4 sulfur cluster binding"/>
    <property type="evidence" value="ECO:0007669"/>
    <property type="project" value="UniProtKB-KW"/>
</dbReference>
<dbReference type="GO" id="GO:0008409">
    <property type="term" value="F:5'-3' exonuclease activity"/>
    <property type="evidence" value="ECO:0007669"/>
    <property type="project" value="UniProtKB-UniRule"/>
</dbReference>
<dbReference type="GO" id="GO:0005524">
    <property type="term" value="F:ATP binding"/>
    <property type="evidence" value="ECO:0007669"/>
    <property type="project" value="UniProtKB-UniRule"/>
</dbReference>
<dbReference type="GO" id="GO:0003690">
    <property type="term" value="F:double-stranded DNA binding"/>
    <property type="evidence" value="ECO:0007669"/>
    <property type="project" value="UniProtKB-UniRule"/>
</dbReference>
<dbReference type="GO" id="GO:0004386">
    <property type="term" value="F:helicase activity"/>
    <property type="evidence" value="ECO:0007669"/>
    <property type="project" value="UniProtKB-KW"/>
</dbReference>
<dbReference type="GO" id="GO:0046872">
    <property type="term" value="F:metal ion binding"/>
    <property type="evidence" value="ECO:0007669"/>
    <property type="project" value="UniProtKB-KW"/>
</dbReference>
<dbReference type="GO" id="GO:0000724">
    <property type="term" value="P:double-strand break repair via homologous recombination"/>
    <property type="evidence" value="ECO:0007669"/>
    <property type="project" value="UniProtKB-UniRule"/>
</dbReference>
<dbReference type="Gene3D" id="3.90.320.10">
    <property type="match status" value="1"/>
</dbReference>
<dbReference type="Gene3D" id="3.40.50.300">
    <property type="entry name" value="P-loop containing nucleotide triphosphate hydrolases"/>
    <property type="match status" value="3"/>
</dbReference>
<dbReference type="HAMAP" id="MF_01452">
    <property type="entry name" value="AddB_type1"/>
    <property type="match status" value="1"/>
</dbReference>
<dbReference type="InterPro" id="IPR049035">
    <property type="entry name" value="ADDB_N"/>
</dbReference>
<dbReference type="InterPro" id="IPR014140">
    <property type="entry name" value="DNA_helicase_suAddB"/>
</dbReference>
<dbReference type="InterPro" id="IPR014017">
    <property type="entry name" value="DNA_helicase_UvrD-like_C"/>
</dbReference>
<dbReference type="InterPro" id="IPR027417">
    <property type="entry name" value="P-loop_NTPase"/>
</dbReference>
<dbReference type="InterPro" id="IPR011604">
    <property type="entry name" value="PDDEXK-like_dom_sf"/>
</dbReference>
<dbReference type="InterPro" id="IPR038726">
    <property type="entry name" value="PDDEXK_AddAB-type"/>
</dbReference>
<dbReference type="NCBIfam" id="TIGR02773">
    <property type="entry name" value="addB_Gpos"/>
    <property type="match status" value="1"/>
</dbReference>
<dbReference type="PANTHER" id="PTHR30591">
    <property type="entry name" value="RECBCD ENZYME SUBUNIT RECC"/>
    <property type="match status" value="1"/>
</dbReference>
<dbReference type="PANTHER" id="PTHR30591:SF1">
    <property type="entry name" value="RECBCD ENZYME SUBUNIT RECC"/>
    <property type="match status" value="1"/>
</dbReference>
<dbReference type="Pfam" id="PF21445">
    <property type="entry name" value="ADDB_N"/>
    <property type="match status" value="1"/>
</dbReference>
<dbReference type="Pfam" id="PF12705">
    <property type="entry name" value="PDDEXK_1"/>
    <property type="match status" value="1"/>
</dbReference>
<dbReference type="SUPFAM" id="SSF52540">
    <property type="entry name" value="P-loop containing nucleoside triphosphate hydrolases"/>
    <property type="match status" value="2"/>
</dbReference>
<dbReference type="PROSITE" id="PS51198">
    <property type="entry name" value="UVRD_HELICASE_ATP_BIND"/>
    <property type="match status" value="1"/>
</dbReference>
<dbReference type="PROSITE" id="PS51217">
    <property type="entry name" value="UVRD_HELICASE_CTER"/>
    <property type="match status" value="1"/>
</dbReference>
<evidence type="ECO:0000255" key="1">
    <source>
        <dbReference type="HAMAP-Rule" id="MF_01452"/>
    </source>
</evidence>
<reference key="1">
    <citation type="journal article" date="2005" name="J. Bacteriol.">
        <title>Insights on evolution of virulence and resistance from the complete genome analysis of an early methicillin-resistant Staphylococcus aureus strain and a biofilm-producing methicillin-resistant Staphylococcus epidermidis strain.</title>
        <authorList>
            <person name="Gill S.R."/>
            <person name="Fouts D.E."/>
            <person name="Archer G.L."/>
            <person name="Mongodin E.F."/>
            <person name="DeBoy R.T."/>
            <person name="Ravel J."/>
            <person name="Paulsen I.T."/>
            <person name="Kolonay J.F."/>
            <person name="Brinkac L.M."/>
            <person name="Beanan M.J."/>
            <person name="Dodson R.J."/>
            <person name="Daugherty S.C."/>
            <person name="Madupu R."/>
            <person name="Angiuoli S.V."/>
            <person name="Durkin A.S."/>
            <person name="Haft D.H."/>
            <person name="Vamathevan J.J."/>
            <person name="Khouri H."/>
            <person name="Utterback T.R."/>
            <person name="Lee C."/>
            <person name="Dimitrov G."/>
            <person name="Jiang L."/>
            <person name="Qin H."/>
            <person name="Weidman J."/>
            <person name="Tran K."/>
            <person name="Kang K.H."/>
            <person name="Hance I.R."/>
            <person name="Nelson K.E."/>
            <person name="Fraser C.M."/>
        </authorList>
    </citation>
    <scope>NUCLEOTIDE SEQUENCE [LARGE SCALE GENOMIC DNA]</scope>
    <source>
        <strain>ATCC 35984 / DSM 28319 / BCRC 17069 / CCUG 31568 / BM 3577 / RP62A</strain>
    </source>
</reference>
<accession>Q5HQJ5</accession>
<organism>
    <name type="scientific">Staphylococcus epidermidis (strain ATCC 35984 / DSM 28319 / BCRC 17069 / CCUG 31568 / BM 3577 / RP62A)</name>
    <dbReference type="NCBI Taxonomy" id="176279"/>
    <lineage>
        <taxon>Bacteria</taxon>
        <taxon>Bacillati</taxon>
        <taxon>Bacillota</taxon>
        <taxon>Bacilli</taxon>
        <taxon>Bacillales</taxon>
        <taxon>Staphylococcaceae</taxon>
        <taxon>Staphylococcus</taxon>
    </lineage>
</organism>
<proteinExistence type="inferred from homology"/>